<reference key="1">
    <citation type="journal article" date="2015" name="Proc. Natl. Acad. Sci. U.S.A.">
        <title>Trichodesmium genome maintains abundant, widespread noncoding DNA in situ, despite oligotrophic lifestyle.</title>
        <authorList>
            <person name="Walworth N."/>
            <person name="Pfreundt U."/>
            <person name="Nelson W.C."/>
            <person name="Mincer T."/>
            <person name="Heidelberg J.F."/>
            <person name="Fu F."/>
            <person name="Waterbury J.B."/>
            <person name="Glavina del Rio T."/>
            <person name="Goodwin L."/>
            <person name="Kyrpides N.C."/>
            <person name="Land M.L."/>
            <person name="Woyke T."/>
            <person name="Hutchins D.A."/>
            <person name="Hess W.R."/>
            <person name="Webb E.A."/>
        </authorList>
    </citation>
    <scope>NUCLEOTIDE SEQUENCE [LARGE SCALE GENOMIC DNA]</scope>
    <source>
        <strain>IMS101</strain>
    </source>
</reference>
<name>PSBD_TRIEI</name>
<accession>Q116J3</accession>
<dbReference type="EC" id="1.10.3.9" evidence="1"/>
<dbReference type="EMBL" id="CP000393">
    <property type="protein sequence ID" value="ABG50581.1"/>
    <property type="molecule type" value="Genomic_DNA"/>
</dbReference>
<dbReference type="RefSeq" id="WP_011610961.1">
    <property type="nucleotide sequence ID" value="NC_008312.1"/>
</dbReference>
<dbReference type="SMR" id="Q116J3"/>
<dbReference type="STRING" id="203124.Tery_1230"/>
<dbReference type="KEGG" id="ter:Tery_1230"/>
<dbReference type="eggNOG" id="ENOG502Z8JK">
    <property type="taxonomic scope" value="Bacteria"/>
</dbReference>
<dbReference type="HOGENOM" id="CLU_077965_0_0_3"/>
<dbReference type="OrthoDB" id="505356at2"/>
<dbReference type="GO" id="GO:0009523">
    <property type="term" value="C:photosystem II"/>
    <property type="evidence" value="ECO:0007669"/>
    <property type="project" value="UniProtKB-KW"/>
</dbReference>
<dbReference type="GO" id="GO:0031676">
    <property type="term" value="C:plasma membrane-derived thylakoid membrane"/>
    <property type="evidence" value="ECO:0007669"/>
    <property type="project" value="UniProtKB-SubCell"/>
</dbReference>
<dbReference type="GO" id="GO:0016168">
    <property type="term" value="F:chlorophyll binding"/>
    <property type="evidence" value="ECO:0007669"/>
    <property type="project" value="UniProtKB-UniRule"/>
</dbReference>
<dbReference type="GO" id="GO:0045156">
    <property type="term" value="F:electron transporter, transferring electrons within the cyclic electron transport pathway of photosynthesis activity"/>
    <property type="evidence" value="ECO:0007669"/>
    <property type="project" value="InterPro"/>
</dbReference>
<dbReference type="GO" id="GO:0005506">
    <property type="term" value="F:iron ion binding"/>
    <property type="evidence" value="ECO:0007669"/>
    <property type="project" value="UniProtKB-UniRule"/>
</dbReference>
<dbReference type="GO" id="GO:0010242">
    <property type="term" value="F:oxygen evolving activity"/>
    <property type="evidence" value="ECO:0007669"/>
    <property type="project" value="UniProtKB-EC"/>
</dbReference>
<dbReference type="GO" id="GO:0009772">
    <property type="term" value="P:photosynthetic electron transport in photosystem II"/>
    <property type="evidence" value="ECO:0007669"/>
    <property type="project" value="InterPro"/>
</dbReference>
<dbReference type="FunFam" id="1.20.85.10:FF:000001">
    <property type="entry name" value="photosystem II D2 protein-like"/>
    <property type="match status" value="1"/>
</dbReference>
<dbReference type="Gene3D" id="1.20.85.10">
    <property type="entry name" value="Photosystem II protein D1-like"/>
    <property type="match status" value="1"/>
</dbReference>
<dbReference type="HAMAP" id="MF_01383">
    <property type="entry name" value="PSII_PsbD_D2"/>
    <property type="match status" value="1"/>
</dbReference>
<dbReference type="InterPro" id="IPR055266">
    <property type="entry name" value="D1/D2"/>
</dbReference>
<dbReference type="InterPro" id="IPR036854">
    <property type="entry name" value="Photo_II_D1/D2_sf"/>
</dbReference>
<dbReference type="InterPro" id="IPR000484">
    <property type="entry name" value="Photo_RC_L/M"/>
</dbReference>
<dbReference type="InterPro" id="IPR055265">
    <property type="entry name" value="Photo_RC_L/M_CS"/>
</dbReference>
<dbReference type="InterPro" id="IPR005868">
    <property type="entry name" value="PSII_PsbD/D2"/>
</dbReference>
<dbReference type="NCBIfam" id="TIGR01152">
    <property type="entry name" value="psbD"/>
    <property type="match status" value="1"/>
</dbReference>
<dbReference type="PANTHER" id="PTHR33149:SF12">
    <property type="entry name" value="PHOTOSYSTEM II D2 PROTEIN"/>
    <property type="match status" value="1"/>
</dbReference>
<dbReference type="PANTHER" id="PTHR33149">
    <property type="entry name" value="PHOTOSYSTEM II PROTEIN D1"/>
    <property type="match status" value="1"/>
</dbReference>
<dbReference type="Pfam" id="PF00124">
    <property type="entry name" value="Photo_RC"/>
    <property type="match status" value="1"/>
</dbReference>
<dbReference type="PRINTS" id="PR00256">
    <property type="entry name" value="REACTNCENTRE"/>
</dbReference>
<dbReference type="SUPFAM" id="SSF81483">
    <property type="entry name" value="Bacterial photosystem II reaction centre, L and M subunits"/>
    <property type="match status" value="1"/>
</dbReference>
<dbReference type="PROSITE" id="PS00244">
    <property type="entry name" value="REACTION_CENTER"/>
    <property type="match status" value="1"/>
</dbReference>
<comment type="function">
    <text evidence="1">Photosystem II (PSII) is a light-driven water:plastoquinone oxidoreductase that uses light energy to abstract electrons from H(2)O, generating O(2) and a proton gradient subsequently used for ATP formation. It consists of a core antenna complex that captures photons, and an electron transfer chain that converts photonic excitation into a charge separation. The D1/D2 (PsbA/PsbD) reaction center heterodimer binds P680, the primary electron donor of PSII as well as several subsequent electron acceptors. D2 is needed for assembly of a stable PSII complex.</text>
</comment>
<comment type="catalytic activity">
    <reaction evidence="1">
        <text>2 a plastoquinone + 4 hnu + 2 H2O = 2 a plastoquinol + O2</text>
        <dbReference type="Rhea" id="RHEA:36359"/>
        <dbReference type="Rhea" id="RHEA-COMP:9561"/>
        <dbReference type="Rhea" id="RHEA-COMP:9562"/>
        <dbReference type="ChEBI" id="CHEBI:15377"/>
        <dbReference type="ChEBI" id="CHEBI:15379"/>
        <dbReference type="ChEBI" id="CHEBI:17757"/>
        <dbReference type="ChEBI" id="CHEBI:30212"/>
        <dbReference type="ChEBI" id="CHEBI:62192"/>
        <dbReference type="EC" id="1.10.3.9"/>
    </reaction>
</comment>
<comment type="cofactor">
    <text evidence="1">The D1/D2 heterodimer binds P680, chlorophylls that are the primary electron donor of PSII, and subsequent electron acceptors. It shares a non-heme iron and each subunit binds pheophytin, quinone, additional chlorophylls, carotenoids and lipids. There is also a Cl(-1) ion associated with D1 and D2, which is required for oxygen evolution. The PSII complex binds additional chlorophylls, carotenoids and specific lipids.</text>
</comment>
<comment type="subunit">
    <text evidence="1">PSII is composed of 1 copy each of membrane proteins PsbA, PsbB, PsbC, PsbD, PsbE, PsbF, PsbH, PsbI, PsbJ, PsbK, PsbL, PsbM, PsbT, PsbX, PsbY, PsbZ, Psb30/Ycf12, peripheral proteins PsbO, CyanoQ (PsbQ), PsbU, PsbV and a large number of cofactors. It forms dimeric complexes.</text>
</comment>
<comment type="subcellular location">
    <subcellularLocation>
        <location evidence="1">Cellular thylakoid membrane</location>
        <topology evidence="1">Multi-pass membrane protein</topology>
    </subcellularLocation>
</comment>
<comment type="miscellaneous">
    <text evidence="1">2 of the reaction center chlorophylls (ChlD1 and ChlD2) are entirely coordinated by water.</text>
</comment>
<comment type="similarity">
    <text evidence="1">Belongs to the reaction center PufL/M/PsbA/D family.</text>
</comment>
<gene>
    <name evidence="1" type="primary">psbD</name>
    <name type="ordered locus">Tery_1230</name>
</gene>
<proteinExistence type="inferred from homology"/>
<feature type="chain" id="PRO_0000359614" description="Photosystem II D2 protein">
    <location>
        <begin position="1"/>
        <end position="352"/>
    </location>
</feature>
<feature type="transmembrane region" description="Helical" evidence="1">
    <location>
        <begin position="40"/>
        <end position="60"/>
    </location>
</feature>
<feature type="transmembrane region" description="Helical" evidence="1">
    <location>
        <begin position="124"/>
        <end position="140"/>
    </location>
</feature>
<feature type="transmembrane region" description="Helical" evidence="1">
    <location>
        <begin position="152"/>
        <end position="165"/>
    </location>
</feature>
<feature type="transmembrane region" description="Helical" evidence="1">
    <location>
        <begin position="207"/>
        <end position="227"/>
    </location>
</feature>
<feature type="transmembrane region" description="Helical" evidence="1">
    <location>
        <begin position="278"/>
        <end position="294"/>
    </location>
</feature>
<feature type="binding site" description="axial binding residue" evidence="1">
    <location>
        <position position="117"/>
    </location>
    <ligand>
        <name>chlorophyll a</name>
        <dbReference type="ChEBI" id="CHEBI:58416"/>
        <label>ChlzD2</label>
    </ligand>
    <ligandPart>
        <name>Mg</name>
        <dbReference type="ChEBI" id="CHEBI:25107"/>
    </ligandPart>
</feature>
<feature type="binding site" evidence="1">
    <location>
        <position position="129"/>
    </location>
    <ligand>
        <name>pheophytin a</name>
        <dbReference type="ChEBI" id="CHEBI:136840"/>
        <label>D2</label>
    </ligand>
</feature>
<feature type="binding site" evidence="1">
    <location>
        <position position="142"/>
    </location>
    <ligand>
        <name>pheophytin a</name>
        <dbReference type="ChEBI" id="CHEBI:136840"/>
        <label>D2</label>
    </ligand>
</feature>
<feature type="binding site" description="axial binding residue" evidence="1">
    <location>
        <position position="197"/>
    </location>
    <ligand>
        <name>chlorophyll a</name>
        <dbReference type="ChEBI" id="CHEBI:58416"/>
        <label>PD2</label>
    </ligand>
    <ligandPart>
        <name>Mg</name>
        <dbReference type="ChEBI" id="CHEBI:25107"/>
    </ligandPart>
</feature>
<feature type="binding site" evidence="1">
    <location>
        <position position="214"/>
    </location>
    <ligand>
        <name>a plastoquinone</name>
        <dbReference type="ChEBI" id="CHEBI:17757"/>
        <label>Q(A)</label>
    </ligand>
</feature>
<feature type="binding site" evidence="1">
    <location>
        <position position="214"/>
    </location>
    <ligand>
        <name>Fe cation</name>
        <dbReference type="ChEBI" id="CHEBI:24875"/>
        <note>ligand shared with heterodimeric partner</note>
    </ligand>
</feature>
<feature type="binding site" evidence="1">
    <location>
        <position position="261"/>
    </location>
    <ligand>
        <name>a plastoquinone</name>
        <dbReference type="ChEBI" id="CHEBI:17757"/>
        <label>Q(A)</label>
    </ligand>
</feature>
<feature type="binding site" evidence="1">
    <location>
        <position position="268"/>
    </location>
    <ligand>
        <name>Fe cation</name>
        <dbReference type="ChEBI" id="CHEBI:24875"/>
        <note>ligand shared with heterodimeric partner</note>
    </ligand>
</feature>
<sequence length="352" mass="39464">MTVAVGRPQSQRGAFDVLDDWLKRDRFVFVGWSGILLFPCAFLSIGGWLTGTTFVTSWYTHGLASSYLEGCNFLTVAISSPAYSMGHSLLFLWGPEAQWDFARWCQIGGLWSFTALHGAFALIGFCLRQIEIARLVGIRPYNAIAFTGPIAVFVSVFLMYPLGQSSWFFAPSFGVAGIFRFILFLQGFHNWTLNPFHMMGVAGILGGALLCAIHGATVENTLFQDGEAANTFRAFEPTQSEETYSMVTANRFWSQIFGIAFSNKRWLHFFMLFVPVTGLWMSSIGIVGLAFNLRAYDFVSQELRAADDPEFETFYTKNILLNEGIRAWMSPADQPHQNFMFPEEVLPRGNAL</sequence>
<organism>
    <name type="scientific">Trichodesmium erythraeum (strain IMS101)</name>
    <dbReference type="NCBI Taxonomy" id="203124"/>
    <lineage>
        <taxon>Bacteria</taxon>
        <taxon>Bacillati</taxon>
        <taxon>Cyanobacteriota</taxon>
        <taxon>Cyanophyceae</taxon>
        <taxon>Oscillatoriophycideae</taxon>
        <taxon>Oscillatoriales</taxon>
        <taxon>Microcoleaceae</taxon>
        <taxon>Trichodesmium</taxon>
    </lineage>
</organism>
<protein>
    <recommendedName>
        <fullName evidence="1">Photosystem II D2 protein</fullName>
        <shortName evidence="1">PSII D2 protein</shortName>
        <ecNumber evidence="1">1.10.3.9</ecNumber>
    </recommendedName>
    <alternativeName>
        <fullName evidence="1">Photosystem Q(A) protein</fullName>
    </alternativeName>
</protein>
<keyword id="KW-0148">Chlorophyll</keyword>
<keyword id="KW-0157">Chromophore</keyword>
<keyword id="KW-0249">Electron transport</keyword>
<keyword id="KW-0408">Iron</keyword>
<keyword id="KW-0460">Magnesium</keyword>
<keyword id="KW-0472">Membrane</keyword>
<keyword id="KW-0479">Metal-binding</keyword>
<keyword id="KW-0560">Oxidoreductase</keyword>
<keyword id="KW-0602">Photosynthesis</keyword>
<keyword id="KW-0604">Photosystem II</keyword>
<keyword id="KW-0793">Thylakoid</keyword>
<keyword id="KW-0812">Transmembrane</keyword>
<keyword id="KW-1133">Transmembrane helix</keyword>
<keyword id="KW-0813">Transport</keyword>
<evidence type="ECO:0000255" key="1">
    <source>
        <dbReference type="HAMAP-Rule" id="MF_01383"/>
    </source>
</evidence>